<gene>
    <name evidence="1" type="primary">ycf4</name>
    <name type="ordered locus">SynRCC307_1694</name>
</gene>
<organism>
    <name type="scientific">Synechococcus sp. (strain RCC307)</name>
    <dbReference type="NCBI Taxonomy" id="316278"/>
    <lineage>
        <taxon>Bacteria</taxon>
        <taxon>Bacillati</taxon>
        <taxon>Cyanobacteriota</taxon>
        <taxon>Cyanophyceae</taxon>
        <taxon>Synechococcales</taxon>
        <taxon>Synechococcaceae</taxon>
        <taxon>Synechococcus</taxon>
    </lineage>
</organism>
<evidence type="ECO:0000255" key="1">
    <source>
        <dbReference type="HAMAP-Rule" id="MF_00437"/>
    </source>
</evidence>
<evidence type="ECO:0000305" key="2"/>
<keyword id="KW-0472">Membrane</keyword>
<keyword id="KW-0602">Photosynthesis</keyword>
<keyword id="KW-1185">Reference proteome</keyword>
<keyword id="KW-0793">Thylakoid</keyword>
<keyword id="KW-0812">Transmembrane</keyword>
<keyword id="KW-1133">Transmembrane helix</keyword>
<name>YCF4_SYNR3</name>
<accession>A5GUN8</accession>
<proteinExistence type="inferred from homology"/>
<comment type="function">
    <text evidence="1">Seems to be required for the assembly of the photosystem I complex.</text>
</comment>
<comment type="subcellular location">
    <subcellularLocation>
        <location evidence="1">Cellular thylakoid membrane</location>
        <topology evidence="1">Multi-pass membrane protein</topology>
    </subcellularLocation>
</comment>
<comment type="similarity">
    <text evidence="1">Belongs to the Ycf4 family.</text>
</comment>
<comment type="sequence caution" evidence="2">
    <conflict type="erroneous initiation">
        <sequence resource="EMBL-CDS" id="CAK28597"/>
    </conflict>
</comment>
<feature type="chain" id="PRO_0000325988" description="Photosystem I assembly protein Ycf4">
    <location>
        <begin position="1"/>
        <end position="177"/>
    </location>
</feature>
<feature type="transmembrane region" description="Helical" evidence="1">
    <location>
        <begin position="20"/>
        <end position="40"/>
    </location>
</feature>
<feature type="transmembrane region" description="Helical" evidence="1">
    <location>
        <begin position="60"/>
        <end position="80"/>
    </location>
</feature>
<reference key="1">
    <citation type="submission" date="2006-05" db="EMBL/GenBank/DDBJ databases">
        <authorList>
            <consortium name="Genoscope"/>
        </authorList>
    </citation>
    <scope>NUCLEOTIDE SEQUENCE [LARGE SCALE GENOMIC DNA]</scope>
    <source>
        <strain>RCC307</strain>
    </source>
</reference>
<sequence length="177" mass="19223">MDAPIDQPVLGSRRLSNYLVALLVSIGGVGFLLTSASSYFGRDFLPIGHPAELIWVPQGLVMGAYGVGAVLLSSYLWAVIAIDVGGGRNLFDRGADTITIERRGFRRLISFTLPCGDVQAVKVEVRDGLNPRRRLALRLRGRRDVPLTRVGEPIALAELERSGAELARYLNVPLEGV</sequence>
<dbReference type="EMBL" id="CT978603">
    <property type="protein sequence ID" value="CAK28597.1"/>
    <property type="status" value="ALT_INIT"/>
    <property type="molecule type" value="Genomic_DNA"/>
</dbReference>
<dbReference type="STRING" id="316278.SynRCC307_1694"/>
<dbReference type="KEGG" id="syr:SynRCC307_1694"/>
<dbReference type="eggNOG" id="ENOG502Z7YX">
    <property type="taxonomic scope" value="Bacteria"/>
</dbReference>
<dbReference type="HOGENOM" id="CLU_095465_0_0_3"/>
<dbReference type="OrthoDB" id="7059574at2"/>
<dbReference type="Proteomes" id="UP000001115">
    <property type="component" value="Chromosome"/>
</dbReference>
<dbReference type="GO" id="GO:0009522">
    <property type="term" value="C:photosystem I"/>
    <property type="evidence" value="ECO:0007669"/>
    <property type="project" value="InterPro"/>
</dbReference>
<dbReference type="GO" id="GO:0031676">
    <property type="term" value="C:plasma membrane-derived thylakoid membrane"/>
    <property type="evidence" value="ECO:0007669"/>
    <property type="project" value="UniProtKB-SubCell"/>
</dbReference>
<dbReference type="GO" id="GO:0015979">
    <property type="term" value="P:photosynthesis"/>
    <property type="evidence" value="ECO:0007669"/>
    <property type="project" value="UniProtKB-UniRule"/>
</dbReference>
<dbReference type="HAMAP" id="MF_00437">
    <property type="entry name" value="Ycf4"/>
    <property type="match status" value="1"/>
</dbReference>
<dbReference type="InterPro" id="IPR003359">
    <property type="entry name" value="PSI_Ycf4_assembly"/>
</dbReference>
<dbReference type="NCBIfam" id="NF002712">
    <property type="entry name" value="PRK02542.1"/>
    <property type="match status" value="1"/>
</dbReference>
<dbReference type="Pfam" id="PF02392">
    <property type="entry name" value="Ycf4"/>
    <property type="match status" value="1"/>
</dbReference>
<protein>
    <recommendedName>
        <fullName evidence="1">Photosystem I assembly protein Ycf4</fullName>
    </recommendedName>
</protein>